<comment type="function">
    <text evidence="1">Catalyzes the methylthiolation of N6-(dimethylallyl)adenosine (i(6)A), leading to the formation of 2-methylthio-N6-(dimethylallyl)adenosine (ms(2)i(6)A) at position 37 in tRNAs that read codons beginning with uridine.</text>
</comment>
<comment type="catalytic activity">
    <reaction evidence="1">
        <text>N(6)-dimethylallyladenosine(37) in tRNA + (sulfur carrier)-SH + AH2 + 2 S-adenosyl-L-methionine = 2-methylsulfanyl-N(6)-dimethylallyladenosine(37) in tRNA + (sulfur carrier)-H + 5'-deoxyadenosine + L-methionine + A + S-adenosyl-L-homocysteine + 2 H(+)</text>
        <dbReference type="Rhea" id="RHEA:37067"/>
        <dbReference type="Rhea" id="RHEA-COMP:10375"/>
        <dbReference type="Rhea" id="RHEA-COMP:10376"/>
        <dbReference type="Rhea" id="RHEA-COMP:14737"/>
        <dbReference type="Rhea" id="RHEA-COMP:14739"/>
        <dbReference type="ChEBI" id="CHEBI:13193"/>
        <dbReference type="ChEBI" id="CHEBI:15378"/>
        <dbReference type="ChEBI" id="CHEBI:17319"/>
        <dbReference type="ChEBI" id="CHEBI:17499"/>
        <dbReference type="ChEBI" id="CHEBI:29917"/>
        <dbReference type="ChEBI" id="CHEBI:57844"/>
        <dbReference type="ChEBI" id="CHEBI:57856"/>
        <dbReference type="ChEBI" id="CHEBI:59789"/>
        <dbReference type="ChEBI" id="CHEBI:64428"/>
        <dbReference type="ChEBI" id="CHEBI:74415"/>
        <dbReference type="ChEBI" id="CHEBI:74417"/>
        <dbReference type="EC" id="2.8.4.3"/>
    </reaction>
</comment>
<comment type="cofactor">
    <cofactor evidence="1">
        <name>[4Fe-4S] cluster</name>
        <dbReference type="ChEBI" id="CHEBI:49883"/>
    </cofactor>
    <text evidence="1">Binds 2 [4Fe-4S] clusters. One cluster is coordinated with 3 cysteines and an exchangeable S-adenosyl-L-methionine.</text>
</comment>
<comment type="subunit">
    <text evidence="1">Monomer.</text>
</comment>
<comment type="subcellular location">
    <subcellularLocation>
        <location evidence="1">Cytoplasm</location>
    </subcellularLocation>
</comment>
<comment type="similarity">
    <text evidence="1">Belongs to the methylthiotransferase family. MiaB subfamily.</text>
</comment>
<evidence type="ECO:0000255" key="1">
    <source>
        <dbReference type="HAMAP-Rule" id="MF_01864"/>
    </source>
</evidence>
<evidence type="ECO:0000255" key="2">
    <source>
        <dbReference type="PROSITE-ProRule" id="PRU01266"/>
    </source>
</evidence>
<gene>
    <name evidence="1" type="primary">miaB</name>
    <name type="ordered locus">Spea_3137</name>
</gene>
<protein>
    <recommendedName>
        <fullName evidence="1">tRNA-2-methylthio-N(6)-dimethylallyladenosine synthase</fullName>
        <ecNumber evidence="1">2.8.4.3</ecNumber>
    </recommendedName>
    <alternativeName>
        <fullName evidence="1">(Dimethylallyl)adenosine tRNA methylthiotransferase MiaB</fullName>
    </alternativeName>
    <alternativeName>
        <fullName evidence="1">tRNA-i(6)A37 methylthiotransferase</fullName>
    </alternativeName>
</protein>
<sequence length="475" mass="53756">MSKKLHIKTWGCQMNEYDSSKMADLLDEYEGYTLTDNAEEADVLLLNTCSIREKAQEKVFHQLGRWKTLKDKKPGLIIGVGGCVASQEGKAIKERAQCVDLIFGPQTLHRLPEMIDQIKDGKKAVIDVSFPEVEKFDRLPEPRAEGPSAFVSIMEGCSKYCSFCVVPYTRGEEVSRPLDDVILEIAQLAEQGVREVNLLGQNVNAYRGATHDDEICTFAELLRYVAAIDGIDRLRFTTSHPIEFTQDIIDVYEDTPELVSFLHLPVQSGSDLILTQMKRGHMAIEYKSIIRRLRKARPDILISSDFIIGFPGESKQDFADTMKLIEDIQFDHSFSFIYSARPGTPAADLPDNVSLDEKKERLAILQDRITQQAMRYSRQMVGTVQRILVEGPSVKNPMELRGRTENSRVVNFEGLHEHIGKFVDVEIVDVYTNSLRGVFIRGEDEMDLRRDLRPSDITAKYKQADDLGVTLFTPA</sequence>
<name>MIAB_SHEPA</name>
<accession>A8H7B6</accession>
<organism>
    <name type="scientific">Shewanella pealeana (strain ATCC 700345 / ANG-SQ1)</name>
    <dbReference type="NCBI Taxonomy" id="398579"/>
    <lineage>
        <taxon>Bacteria</taxon>
        <taxon>Pseudomonadati</taxon>
        <taxon>Pseudomonadota</taxon>
        <taxon>Gammaproteobacteria</taxon>
        <taxon>Alteromonadales</taxon>
        <taxon>Shewanellaceae</taxon>
        <taxon>Shewanella</taxon>
    </lineage>
</organism>
<dbReference type="EC" id="2.8.4.3" evidence="1"/>
<dbReference type="EMBL" id="CP000851">
    <property type="protein sequence ID" value="ABV88453.1"/>
    <property type="molecule type" value="Genomic_DNA"/>
</dbReference>
<dbReference type="RefSeq" id="WP_012156355.1">
    <property type="nucleotide sequence ID" value="NC_009901.1"/>
</dbReference>
<dbReference type="SMR" id="A8H7B6"/>
<dbReference type="STRING" id="398579.Spea_3137"/>
<dbReference type="KEGG" id="spl:Spea_3137"/>
<dbReference type="eggNOG" id="COG0621">
    <property type="taxonomic scope" value="Bacteria"/>
</dbReference>
<dbReference type="HOGENOM" id="CLU_018697_2_0_6"/>
<dbReference type="OrthoDB" id="9805215at2"/>
<dbReference type="Proteomes" id="UP000002608">
    <property type="component" value="Chromosome"/>
</dbReference>
<dbReference type="GO" id="GO:0005829">
    <property type="term" value="C:cytosol"/>
    <property type="evidence" value="ECO:0007669"/>
    <property type="project" value="TreeGrafter"/>
</dbReference>
<dbReference type="GO" id="GO:0051539">
    <property type="term" value="F:4 iron, 4 sulfur cluster binding"/>
    <property type="evidence" value="ECO:0007669"/>
    <property type="project" value="UniProtKB-UniRule"/>
</dbReference>
<dbReference type="GO" id="GO:0046872">
    <property type="term" value="F:metal ion binding"/>
    <property type="evidence" value="ECO:0007669"/>
    <property type="project" value="UniProtKB-KW"/>
</dbReference>
<dbReference type="GO" id="GO:0035597">
    <property type="term" value="F:N6-isopentenyladenosine methylthiotransferase activity"/>
    <property type="evidence" value="ECO:0007669"/>
    <property type="project" value="TreeGrafter"/>
</dbReference>
<dbReference type="CDD" id="cd01335">
    <property type="entry name" value="Radical_SAM"/>
    <property type="match status" value="1"/>
</dbReference>
<dbReference type="FunFam" id="3.40.50.12160:FF:000001">
    <property type="entry name" value="tRNA-2-methylthio-N(6)-dimethylallyladenosine synthase"/>
    <property type="match status" value="1"/>
</dbReference>
<dbReference type="FunFam" id="3.80.30.20:FF:000001">
    <property type="entry name" value="tRNA-2-methylthio-N(6)-dimethylallyladenosine synthase 2"/>
    <property type="match status" value="1"/>
</dbReference>
<dbReference type="Gene3D" id="3.40.50.12160">
    <property type="entry name" value="Methylthiotransferase, N-terminal domain"/>
    <property type="match status" value="1"/>
</dbReference>
<dbReference type="Gene3D" id="3.80.30.20">
    <property type="entry name" value="tm_1862 like domain"/>
    <property type="match status" value="1"/>
</dbReference>
<dbReference type="HAMAP" id="MF_01864">
    <property type="entry name" value="tRNA_metthiotr_MiaB"/>
    <property type="match status" value="1"/>
</dbReference>
<dbReference type="InterPro" id="IPR006638">
    <property type="entry name" value="Elp3/MiaA/NifB-like_rSAM"/>
</dbReference>
<dbReference type="InterPro" id="IPR005839">
    <property type="entry name" value="Methylthiotransferase"/>
</dbReference>
<dbReference type="InterPro" id="IPR020612">
    <property type="entry name" value="Methylthiotransferase_CS"/>
</dbReference>
<dbReference type="InterPro" id="IPR013848">
    <property type="entry name" value="Methylthiotransferase_N"/>
</dbReference>
<dbReference type="InterPro" id="IPR038135">
    <property type="entry name" value="Methylthiotransferase_N_sf"/>
</dbReference>
<dbReference type="InterPro" id="IPR006463">
    <property type="entry name" value="MiaB_methiolase"/>
</dbReference>
<dbReference type="InterPro" id="IPR007197">
    <property type="entry name" value="rSAM"/>
</dbReference>
<dbReference type="InterPro" id="IPR023404">
    <property type="entry name" value="rSAM_horseshoe"/>
</dbReference>
<dbReference type="InterPro" id="IPR002792">
    <property type="entry name" value="TRAM_dom"/>
</dbReference>
<dbReference type="NCBIfam" id="TIGR01574">
    <property type="entry name" value="miaB-methiolase"/>
    <property type="match status" value="1"/>
</dbReference>
<dbReference type="NCBIfam" id="TIGR00089">
    <property type="entry name" value="MiaB/RimO family radical SAM methylthiotransferase"/>
    <property type="match status" value="1"/>
</dbReference>
<dbReference type="PANTHER" id="PTHR43020">
    <property type="entry name" value="CDK5 REGULATORY SUBUNIT-ASSOCIATED PROTEIN 1"/>
    <property type="match status" value="1"/>
</dbReference>
<dbReference type="PANTHER" id="PTHR43020:SF2">
    <property type="entry name" value="MITOCHONDRIAL TRNA METHYLTHIOTRANSFERASE CDK5RAP1"/>
    <property type="match status" value="1"/>
</dbReference>
<dbReference type="Pfam" id="PF04055">
    <property type="entry name" value="Radical_SAM"/>
    <property type="match status" value="1"/>
</dbReference>
<dbReference type="Pfam" id="PF01938">
    <property type="entry name" value="TRAM"/>
    <property type="match status" value="1"/>
</dbReference>
<dbReference type="Pfam" id="PF00919">
    <property type="entry name" value="UPF0004"/>
    <property type="match status" value="1"/>
</dbReference>
<dbReference type="SFLD" id="SFLDF00273">
    <property type="entry name" value="(dimethylallyl)adenosine_tRNA"/>
    <property type="match status" value="1"/>
</dbReference>
<dbReference type="SFLD" id="SFLDG01082">
    <property type="entry name" value="B12-binding_domain_containing"/>
    <property type="match status" value="1"/>
</dbReference>
<dbReference type="SFLD" id="SFLDG01061">
    <property type="entry name" value="methylthiotransferase"/>
    <property type="match status" value="1"/>
</dbReference>
<dbReference type="SMART" id="SM00729">
    <property type="entry name" value="Elp3"/>
    <property type="match status" value="1"/>
</dbReference>
<dbReference type="SUPFAM" id="SSF102114">
    <property type="entry name" value="Radical SAM enzymes"/>
    <property type="match status" value="1"/>
</dbReference>
<dbReference type="PROSITE" id="PS51449">
    <property type="entry name" value="MTTASE_N"/>
    <property type="match status" value="1"/>
</dbReference>
<dbReference type="PROSITE" id="PS01278">
    <property type="entry name" value="MTTASE_RADICAL"/>
    <property type="match status" value="1"/>
</dbReference>
<dbReference type="PROSITE" id="PS51918">
    <property type="entry name" value="RADICAL_SAM"/>
    <property type="match status" value="1"/>
</dbReference>
<dbReference type="PROSITE" id="PS50926">
    <property type="entry name" value="TRAM"/>
    <property type="match status" value="1"/>
</dbReference>
<keyword id="KW-0004">4Fe-4S</keyword>
<keyword id="KW-0963">Cytoplasm</keyword>
<keyword id="KW-0408">Iron</keyword>
<keyword id="KW-0411">Iron-sulfur</keyword>
<keyword id="KW-0479">Metal-binding</keyword>
<keyword id="KW-1185">Reference proteome</keyword>
<keyword id="KW-0949">S-adenosyl-L-methionine</keyword>
<keyword id="KW-0808">Transferase</keyword>
<keyword id="KW-0819">tRNA processing</keyword>
<reference key="1">
    <citation type="submission" date="2007-10" db="EMBL/GenBank/DDBJ databases">
        <title>Complete sequence of Shewanella pealeana ATCC 700345.</title>
        <authorList>
            <consortium name="US DOE Joint Genome Institute"/>
            <person name="Copeland A."/>
            <person name="Lucas S."/>
            <person name="Lapidus A."/>
            <person name="Barry K."/>
            <person name="Glavina del Rio T."/>
            <person name="Dalin E."/>
            <person name="Tice H."/>
            <person name="Pitluck S."/>
            <person name="Chertkov O."/>
            <person name="Brettin T."/>
            <person name="Bruce D."/>
            <person name="Detter J.C."/>
            <person name="Han C."/>
            <person name="Schmutz J."/>
            <person name="Larimer F."/>
            <person name="Land M."/>
            <person name="Hauser L."/>
            <person name="Kyrpides N."/>
            <person name="Kim E."/>
            <person name="Zhao J.-S.Z."/>
            <person name="Manno D."/>
            <person name="Hawari J."/>
            <person name="Richardson P."/>
        </authorList>
    </citation>
    <scope>NUCLEOTIDE SEQUENCE [LARGE SCALE GENOMIC DNA]</scope>
    <source>
        <strain>ATCC 700345 / ANG-SQ1</strain>
    </source>
</reference>
<proteinExistence type="inferred from homology"/>
<feature type="chain" id="PRO_0000374542" description="tRNA-2-methylthio-N(6)-dimethylallyladenosine synthase">
    <location>
        <begin position="1"/>
        <end position="475"/>
    </location>
</feature>
<feature type="domain" description="MTTase N-terminal" evidence="1">
    <location>
        <begin position="3"/>
        <end position="120"/>
    </location>
</feature>
<feature type="domain" description="Radical SAM core" evidence="2">
    <location>
        <begin position="143"/>
        <end position="375"/>
    </location>
</feature>
<feature type="domain" description="TRAM" evidence="1">
    <location>
        <begin position="378"/>
        <end position="441"/>
    </location>
</feature>
<feature type="binding site" evidence="1">
    <location>
        <position position="12"/>
    </location>
    <ligand>
        <name>[4Fe-4S] cluster</name>
        <dbReference type="ChEBI" id="CHEBI:49883"/>
        <label>1</label>
    </ligand>
</feature>
<feature type="binding site" evidence="1">
    <location>
        <position position="49"/>
    </location>
    <ligand>
        <name>[4Fe-4S] cluster</name>
        <dbReference type="ChEBI" id="CHEBI:49883"/>
        <label>1</label>
    </ligand>
</feature>
<feature type="binding site" evidence="1">
    <location>
        <position position="83"/>
    </location>
    <ligand>
        <name>[4Fe-4S] cluster</name>
        <dbReference type="ChEBI" id="CHEBI:49883"/>
        <label>1</label>
    </ligand>
</feature>
<feature type="binding site" evidence="1">
    <location>
        <position position="157"/>
    </location>
    <ligand>
        <name>[4Fe-4S] cluster</name>
        <dbReference type="ChEBI" id="CHEBI:49883"/>
        <label>2</label>
        <note>4Fe-4S-S-AdoMet</note>
    </ligand>
</feature>
<feature type="binding site" evidence="1">
    <location>
        <position position="161"/>
    </location>
    <ligand>
        <name>[4Fe-4S] cluster</name>
        <dbReference type="ChEBI" id="CHEBI:49883"/>
        <label>2</label>
        <note>4Fe-4S-S-AdoMet</note>
    </ligand>
</feature>
<feature type="binding site" evidence="1">
    <location>
        <position position="164"/>
    </location>
    <ligand>
        <name>[4Fe-4S] cluster</name>
        <dbReference type="ChEBI" id="CHEBI:49883"/>
        <label>2</label>
        <note>4Fe-4S-S-AdoMet</note>
    </ligand>
</feature>